<organism>
    <name type="scientific">Streptococcus sanguinis (strain SK36)</name>
    <dbReference type="NCBI Taxonomy" id="388919"/>
    <lineage>
        <taxon>Bacteria</taxon>
        <taxon>Bacillati</taxon>
        <taxon>Bacillota</taxon>
        <taxon>Bacilli</taxon>
        <taxon>Lactobacillales</taxon>
        <taxon>Streptococcaceae</taxon>
        <taxon>Streptococcus</taxon>
    </lineage>
</organism>
<keyword id="KW-1185">Reference proteome</keyword>
<keyword id="KW-0687">Ribonucleoprotein</keyword>
<keyword id="KW-0689">Ribosomal protein</keyword>
<proteinExistence type="inferred from homology"/>
<name>RL7_STRSV</name>
<comment type="function">
    <text evidence="1">Forms part of the ribosomal stalk which helps the ribosome interact with GTP-bound translation factors. Is thus essential for accurate translation.</text>
</comment>
<comment type="subunit">
    <text evidence="1">Homodimer. Part of the ribosomal stalk of the 50S ribosomal subunit. Forms a multimeric L10(L12)X complex, where L10 forms an elongated spine to which 2 to 4 L12 dimers bind in a sequential fashion. Binds GTP-bound translation factors.</text>
</comment>
<comment type="similarity">
    <text evidence="1">Belongs to the bacterial ribosomal protein bL12 family.</text>
</comment>
<accession>A3CMW2</accession>
<feature type="chain" id="PRO_1000007099" description="Large ribosomal subunit protein bL12">
    <location>
        <begin position="1"/>
        <end position="122"/>
    </location>
</feature>
<sequence>MALNIENIIAEIKEASILELNDLVKAIEEEFGVTAAAPVAVAAAGAGEAAAAKDSFDIELTAAGDKKVGVIKVVREITGLGLKEAKELVDGAPNVIKEGVAAAEAEELKAKLEEAGASVTLK</sequence>
<gene>
    <name evidence="1" type="primary">rplL</name>
    <name type="ordered locus">SSA_1105</name>
</gene>
<reference key="1">
    <citation type="journal article" date="2007" name="J. Bacteriol.">
        <title>Genome of the opportunistic pathogen Streptococcus sanguinis.</title>
        <authorList>
            <person name="Xu P."/>
            <person name="Alves J.M."/>
            <person name="Kitten T."/>
            <person name="Brown A."/>
            <person name="Chen Z."/>
            <person name="Ozaki L.S."/>
            <person name="Manque P."/>
            <person name="Ge X."/>
            <person name="Serrano M.G."/>
            <person name="Puiu D."/>
            <person name="Hendricks S."/>
            <person name="Wang Y."/>
            <person name="Chaplin M.D."/>
            <person name="Akan D."/>
            <person name="Paik S."/>
            <person name="Peterson D.L."/>
            <person name="Macrina F.L."/>
            <person name="Buck G.A."/>
        </authorList>
    </citation>
    <scope>NUCLEOTIDE SEQUENCE [LARGE SCALE GENOMIC DNA]</scope>
    <source>
        <strain>SK36</strain>
    </source>
</reference>
<protein>
    <recommendedName>
        <fullName evidence="1">Large ribosomal subunit protein bL12</fullName>
    </recommendedName>
    <alternativeName>
        <fullName evidence="2">50S ribosomal protein L7/L12</fullName>
    </alternativeName>
</protein>
<evidence type="ECO:0000255" key="1">
    <source>
        <dbReference type="HAMAP-Rule" id="MF_00368"/>
    </source>
</evidence>
<evidence type="ECO:0000305" key="2"/>
<dbReference type="EMBL" id="CP000387">
    <property type="protein sequence ID" value="ABN44517.1"/>
    <property type="molecule type" value="Genomic_DNA"/>
</dbReference>
<dbReference type="RefSeq" id="WP_002900419.1">
    <property type="nucleotide sequence ID" value="NZ_CAXTYR010000001.1"/>
</dbReference>
<dbReference type="RefSeq" id="YP_001035067.1">
    <property type="nucleotide sequence ID" value="NC_009009.1"/>
</dbReference>
<dbReference type="SMR" id="A3CMW2"/>
<dbReference type="STRING" id="388919.SSA_1105"/>
<dbReference type="GeneID" id="48425508"/>
<dbReference type="KEGG" id="ssa:SSA_1105"/>
<dbReference type="PATRIC" id="fig|388919.9.peg.1051"/>
<dbReference type="eggNOG" id="COG0222">
    <property type="taxonomic scope" value="Bacteria"/>
</dbReference>
<dbReference type="HOGENOM" id="CLU_086499_3_2_9"/>
<dbReference type="OrthoDB" id="9811748at2"/>
<dbReference type="Proteomes" id="UP000002148">
    <property type="component" value="Chromosome"/>
</dbReference>
<dbReference type="GO" id="GO:0022625">
    <property type="term" value="C:cytosolic large ribosomal subunit"/>
    <property type="evidence" value="ECO:0007669"/>
    <property type="project" value="TreeGrafter"/>
</dbReference>
<dbReference type="GO" id="GO:0003729">
    <property type="term" value="F:mRNA binding"/>
    <property type="evidence" value="ECO:0007669"/>
    <property type="project" value="TreeGrafter"/>
</dbReference>
<dbReference type="GO" id="GO:0003735">
    <property type="term" value="F:structural constituent of ribosome"/>
    <property type="evidence" value="ECO:0007669"/>
    <property type="project" value="InterPro"/>
</dbReference>
<dbReference type="GO" id="GO:0006412">
    <property type="term" value="P:translation"/>
    <property type="evidence" value="ECO:0007669"/>
    <property type="project" value="UniProtKB-UniRule"/>
</dbReference>
<dbReference type="CDD" id="cd00387">
    <property type="entry name" value="Ribosomal_L7_L12"/>
    <property type="match status" value="1"/>
</dbReference>
<dbReference type="FunFam" id="1.20.5.710:FF:000002">
    <property type="entry name" value="50S ribosomal protein L7/L12"/>
    <property type="match status" value="1"/>
</dbReference>
<dbReference type="FunFam" id="3.30.1390.10:FF:000001">
    <property type="entry name" value="50S ribosomal protein L7/L12"/>
    <property type="match status" value="1"/>
</dbReference>
<dbReference type="Gene3D" id="3.30.1390.10">
    <property type="match status" value="1"/>
</dbReference>
<dbReference type="Gene3D" id="1.20.5.710">
    <property type="entry name" value="Single helix bin"/>
    <property type="match status" value="1"/>
</dbReference>
<dbReference type="HAMAP" id="MF_00368">
    <property type="entry name" value="Ribosomal_bL12"/>
    <property type="match status" value="1"/>
</dbReference>
<dbReference type="InterPro" id="IPR000206">
    <property type="entry name" value="Ribosomal_bL12"/>
</dbReference>
<dbReference type="InterPro" id="IPR013823">
    <property type="entry name" value="Ribosomal_bL12_C"/>
</dbReference>
<dbReference type="InterPro" id="IPR014719">
    <property type="entry name" value="Ribosomal_bL12_C/ClpS-like"/>
</dbReference>
<dbReference type="InterPro" id="IPR008932">
    <property type="entry name" value="Ribosomal_bL12_oligo"/>
</dbReference>
<dbReference type="InterPro" id="IPR036235">
    <property type="entry name" value="Ribosomal_bL12_oligo_N_sf"/>
</dbReference>
<dbReference type="NCBIfam" id="TIGR00855">
    <property type="entry name" value="L12"/>
    <property type="match status" value="1"/>
</dbReference>
<dbReference type="PANTHER" id="PTHR45987">
    <property type="entry name" value="39S RIBOSOMAL PROTEIN L12"/>
    <property type="match status" value="1"/>
</dbReference>
<dbReference type="PANTHER" id="PTHR45987:SF4">
    <property type="entry name" value="LARGE RIBOSOMAL SUBUNIT PROTEIN BL12M"/>
    <property type="match status" value="1"/>
</dbReference>
<dbReference type="Pfam" id="PF00542">
    <property type="entry name" value="Ribosomal_L12"/>
    <property type="match status" value="1"/>
</dbReference>
<dbReference type="Pfam" id="PF16320">
    <property type="entry name" value="Ribosomal_L12_N"/>
    <property type="match status" value="1"/>
</dbReference>
<dbReference type="SUPFAM" id="SSF54736">
    <property type="entry name" value="ClpS-like"/>
    <property type="match status" value="1"/>
</dbReference>
<dbReference type="SUPFAM" id="SSF48300">
    <property type="entry name" value="Ribosomal protein L7/12, oligomerisation (N-terminal) domain"/>
    <property type="match status" value="1"/>
</dbReference>